<accession>Q4ZYK0</accession>
<comment type="function">
    <text evidence="1">Catalyzes the transfer of a phosphate group to glutamate to form L-glutamate 5-phosphate.</text>
</comment>
<comment type="catalytic activity">
    <reaction evidence="1">
        <text>L-glutamate + ATP = L-glutamyl 5-phosphate + ADP</text>
        <dbReference type="Rhea" id="RHEA:14877"/>
        <dbReference type="ChEBI" id="CHEBI:29985"/>
        <dbReference type="ChEBI" id="CHEBI:30616"/>
        <dbReference type="ChEBI" id="CHEBI:58274"/>
        <dbReference type="ChEBI" id="CHEBI:456216"/>
        <dbReference type="EC" id="2.7.2.11"/>
    </reaction>
</comment>
<comment type="pathway">
    <text evidence="1">Amino-acid biosynthesis; L-proline biosynthesis; L-glutamate 5-semialdehyde from L-glutamate: step 1/2.</text>
</comment>
<comment type="subcellular location">
    <subcellularLocation>
        <location evidence="1">Cytoplasm</location>
    </subcellularLocation>
</comment>
<comment type="similarity">
    <text evidence="1">Belongs to the glutamate 5-kinase family.</text>
</comment>
<feature type="chain" id="PRO_0000230060" description="Glutamate 5-kinase">
    <location>
        <begin position="1"/>
        <end position="372"/>
    </location>
</feature>
<feature type="domain" description="PUA" evidence="1">
    <location>
        <begin position="280"/>
        <end position="358"/>
    </location>
</feature>
<feature type="binding site" evidence="1">
    <location>
        <position position="14"/>
    </location>
    <ligand>
        <name>ATP</name>
        <dbReference type="ChEBI" id="CHEBI:30616"/>
    </ligand>
</feature>
<feature type="binding site" evidence="1">
    <location>
        <position position="54"/>
    </location>
    <ligand>
        <name>substrate</name>
    </ligand>
</feature>
<feature type="binding site" evidence="1">
    <location>
        <position position="141"/>
    </location>
    <ligand>
        <name>substrate</name>
    </ligand>
</feature>
<feature type="binding site" evidence="1">
    <location>
        <position position="153"/>
    </location>
    <ligand>
        <name>substrate</name>
    </ligand>
</feature>
<feature type="binding site" evidence="1">
    <location>
        <begin position="173"/>
        <end position="174"/>
    </location>
    <ligand>
        <name>ATP</name>
        <dbReference type="ChEBI" id="CHEBI:30616"/>
    </ligand>
</feature>
<protein>
    <recommendedName>
        <fullName evidence="1">Glutamate 5-kinase</fullName>
        <ecNumber evidence="1">2.7.2.11</ecNumber>
    </recommendedName>
    <alternativeName>
        <fullName evidence="1">Gamma-glutamyl kinase</fullName>
        <shortName evidence="1">GK</shortName>
    </alternativeName>
</protein>
<keyword id="KW-0028">Amino-acid biosynthesis</keyword>
<keyword id="KW-0067">ATP-binding</keyword>
<keyword id="KW-0963">Cytoplasm</keyword>
<keyword id="KW-0418">Kinase</keyword>
<keyword id="KW-0547">Nucleotide-binding</keyword>
<keyword id="KW-0641">Proline biosynthesis</keyword>
<keyword id="KW-0808">Transferase</keyword>
<evidence type="ECO:0000255" key="1">
    <source>
        <dbReference type="HAMAP-Rule" id="MF_00456"/>
    </source>
</evidence>
<dbReference type="EC" id="2.7.2.11" evidence="1"/>
<dbReference type="EMBL" id="CP000075">
    <property type="protein sequence ID" value="AAY35772.1"/>
    <property type="molecule type" value="Genomic_DNA"/>
</dbReference>
<dbReference type="RefSeq" id="WP_003403542.1">
    <property type="nucleotide sequence ID" value="NC_007005.1"/>
</dbReference>
<dbReference type="RefSeq" id="YP_233810.1">
    <property type="nucleotide sequence ID" value="NC_007005.1"/>
</dbReference>
<dbReference type="SMR" id="Q4ZYK0"/>
<dbReference type="STRING" id="205918.Psyr_0704"/>
<dbReference type="KEGG" id="psb:Psyr_0704"/>
<dbReference type="PATRIC" id="fig|205918.7.peg.730"/>
<dbReference type="eggNOG" id="COG0263">
    <property type="taxonomic scope" value="Bacteria"/>
</dbReference>
<dbReference type="HOGENOM" id="CLU_025400_2_0_6"/>
<dbReference type="OrthoDB" id="9804434at2"/>
<dbReference type="UniPathway" id="UPA00098">
    <property type="reaction ID" value="UER00359"/>
</dbReference>
<dbReference type="Proteomes" id="UP000000426">
    <property type="component" value="Chromosome"/>
</dbReference>
<dbReference type="GO" id="GO:0005829">
    <property type="term" value="C:cytosol"/>
    <property type="evidence" value="ECO:0007669"/>
    <property type="project" value="TreeGrafter"/>
</dbReference>
<dbReference type="GO" id="GO:0005524">
    <property type="term" value="F:ATP binding"/>
    <property type="evidence" value="ECO:0007669"/>
    <property type="project" value="UniProtKB-KW"/>
</dbReference>
<dbReference type="GO" id="GO:0004349">
    <property type="term" value="F:glutamate 5-kinase activity"/>
    <property type="evidence" value="ECO:0007669"/>
    <property type="project" value="UniProtKB-UniRule"/>
</dbReference>
<dbReference type="GO" id="GO:0003723">
    <property type="term" value="F:RNA binding"/>
    <property type="evidence" value="ECO:0007669"/>
    <property type="project" value="InterPro"/>
</dbReference>
<dbReference type="GO" id="GO:0055129">
    <property type="term" value="P:L-proline biosynthetic process"/>
    <property type="evidence" value="ECO:0007669"/>
    <property type="project" value="UniProtKB-UniRule"/>
</dbReference>
<dbReference type="CDD" id="cd04242">
    <property type="entry name" value="AAK_G5K_ProB"/>
    <property type="match status" value="1"/>
</dbReference>
<dbReference type="CDD" id="cd21157">
    <property type="entry name" value="PUA_G5K"/>
    <property type="match status" value="1"/>
</dbReference>
<dbReference type="FunFam" id="2.30.130.10:FF:000007">
    <property type="entry name" value="Glutamate 5-kinase"/>
    <property type="match status" value="1"/>
</dbReference>
<dbReference type="FunFam" id="3.40.1160.10:FF:000018">
    <property type="entry name" value="Glutamate 5-kinase"/>
    <property type="match status" value="1"/>
</dbReference>
<dbReference type="Gene3D" id="3.40.1160.10">
    <property type="entry name" value="Acetylglutamate kinase-like"/>
    <property type="match status" value="2"/>
</dbReference>
<dbReference type="Gene3D" id="2.30.130.10">
    <property type="entry name" value="PUA domain"/>
    <property type="match status" value="1"/>
</dbReference>
<dbReference type="HAMAP" id="MF_00456">
    <property type="entry name" value="ProB"/>
    <property type="match status" value="1"/>
</dbReference>
<dbReference type="InterPro" id="IPR036393">
    <property type="entry name" value="AceGlu_kinase-like_sf"/>
</dbReference>
<dbReference type="InterPro" id="IPR001048">
    <property type="entry name" value="Asp/Glu/Uridylate_kinase"/>
</dbReference>
<dbReference type="InterPro" id="IPR041739">
    <property type="entry name" value="G5K_ProB"/>
</dbReference>
<dbReference type="InterPro" id="IPR001057">
    <property type="entry name" value="Glu/AcGlu_kinase"/>
</dbReference>
<dbReference type="InterPro" id="IPR011529">
    <property type="entry name" value="Glu_5kinase"/>
</dbReference>
<dbReference type="InterPro" id="IPR005715">
    <property type="entry name" value="Glu_5kinase/COase_Synthase"/>
</dbReference>
<dbReference type="InterPro" id="IPR019797">
    <property type="entry name" value="Glutamate_5-kinase_CS"/>
</dbReference>
<dbReference type="InterPro" id="IPR002478">
    <property type="entry name" value="PUA"/>
</dbReference>
<dbReference type="InterPro" id="IPR015947">
    <property type="entry name" value="PUA-like_sf"/>
</dbReference>
<dbReference type="InterPro" id="IPR036974">
    <property type="entry name" value="PUA_sf"/>
</dbReference>
<dbReference type="NCBIfam" id="TIGR01027">
    <property type="entry name" value="proB"/>
    <property type="match status" value="1"/>
</dbReference>
<dbReference type="PANTHER" id="PTHR43654">
    <property type="entry name" value="GLUTAMATE 5-KINASE"/>
    <property type="match status" value="1"/>
</dbReference>
<dbReference type="PANTHER" id="PTHR43654:SF1">
    <property type="entry name" value="ISOPENTENYL PHOSPHATE KINASE"/>
    <property type="match status" value="1"/>
</dbReference>
<dbReference type="Pfam" id="PF00696">
    <property type="entry name" value="AA_kinase"/>
    <property type="match status" value="1"/>
</dbReference>
<dbReference type="Pfam" id="PF01472">
    <property type="entry name" value="PUA"/>
    <property type="match status" value="1"/>
</dbReference>
<dbReference type="PIRSF" id="PIRSF000729">
    <property type="entry name" value="GK"/>
    <property type="match status" value="1"/>
</dbReference>
<dbReference type="PRINTS" id="PR00474">
    <property type="entry name" value="GLU5KINASE"/>
</dbReference>
<dbReference type="SMART" id="SM00359">
    <property type="entry name" value="PUA"/>
    <property type="match status" value="1"/>
</dbReference>
<dbReference type="SUPFAM" id="SSF53633">
    <property type="entry name" value="Carbamate kinase-like"/>
    <property type="match status" value="1"/>
</dbReference>
<dbReference type="SUPFAM" id="SSF88697">
    <property type="entry name" value="PUA domain-like"/>
    <property type="match status" value="1"/>
</dbReference>
<dbReference type="PROSITE" id="PS00902">
    <property type="entry name" value="GLUTAMATE_5_KINASE"/>
    <property type="match status" value="1"/>
</dbReference>
<dbReference type="PROSITE" id="PS50890">
    <property type="entry name" value="PUA"/>
    <property type="match status" value="1"/>
</dbReference>
<organism>
    <name type="scientific">Pseudomonas syringae pv. syringae (strain B728a)</name>
    <dbReference type="NCBI Taxonomy" id="205918"/>
    <lineage>
        <taxon>Bacteria</taxon>
        <taxon>Pseudomonadati</taxon>
        <taxon>Pseudomonadota</taxon>
        <taxon>Gammaproteobacteria</taxon>
        <taxon>Pseudomonadales</taxon>
        <taxon>Pseudomonadaceae</taxon>
        <taxon>Pseudomonas</taxon>
        <taxon>Pseudomonas syringae</taxon>
    </lineage>
</organism>
<name>PROB_PSEU2</name>
<sequence>MRSKVTGAQRWVVKIGSALLTADGKGLDRNAMGVWVEQMVALHEAGVELVLVSSGAVAAGMSRLGWTARPSAMHELQAAAAIGQMGLVQAWESSFAEHGRHTAQILLTHDDLSDRKRYLNARSTLRTLVELGVVPVINENDTVVTDEIRFGDNDTLAALVANLVEADLLVILTDRDGMFDADPRNNPEAQLIYEARADDPALDAVAGGTGGALGRGGMQTKLRAARLAARSGAHTVIVGGRIERVLARLKGGERLGTLLSPERGMLAARKQWLAGHLQTRGTLVLDDGAVAALARDQKSLLPVGVKLVQGSFRRGEMVVCVAQDGREIARGLSNYSAIEAQKIIGHSSESIVRELGYMAEPELIHRDNLILV</sequence>
<reference key="1">
    <citation type="journal article" date="2005" name="Proc. Natl. Acad. Sci. U.S.A.">
        <title>Comparison of the complete genome sequences of Pseudomonas syringae pv. syringae B728a and pv. tomato DC3000.</title>
        <authorList>
            <person name="Feil H."/>
            <person name="Feil W.S."/>
            <person name="Chain P."/>
            <person name="Larimer F."/>
            <person name="Dibartolo G."/>
            <person name="Copeland A."/>
            <person name="Lykidis A."/>
            <person name="Trong S."/>
            <person name="Nolan M."/>
            <person name="Goltsman E."/>
            <person name="Thiel J."/>
            <person name="Malfatti S."/>
            <person name="Loper J.E."/>
            <person name="Lapidus A."/>
            <person name="Detter J.C."/>
            <person name="Land M."/>
            <person name="Richardson P.M."/>
            <person name="Kyrpides N.C."/>
            <person name="Ivanova N."/>
            <person name="Lindow S.E."/>
        </authorList>
    </citation>
    <scope>NUCLEOTIDE SEQUENCE [LARGE SCALE GENOMIC DNA]</scope>
    <source>
        <strain>B728a</strain>
    </source>
</reference>
<gene>
    <name evidence="1" type="primary">proB</name>
    <name type="ordered locus">Psyr_0704</name>
</gene>
<proteinExistence type="inferred from homology"/>